<gene>
    <name evidence="1" type="primary">alaS</name>
    <name type="ordered locus">H16_A2769</name>
</gene>
<sequence>MKVSDIRSKFLQFFESKGHTVVRSSSLVPANDPTLLFTNSGMVQFKDVFLGTDKRPYTRATSAQRSVRAGGKHNDLENVGYTARHHTFFEMLGNFSFGDYFKRDAILYAWELLTKTYQLPAEKLWVTVYAEDDEAYDIWAKEVGVPAERIVRIGDNKGARYASDNFWQMADTGPCGPCSEIFYDHGPDVWGGPPGSPEEDGDRYIEVWNLVFMQFNRDEQGNMTPLPKPCVDTGMGLERIAAVLQHVHSNYEIDLFQALIKAAARETHIDNLNQNSLKVIADHIRACSFLIVDGVIPGNEGRGYVLRRIIRRAIRHGYKLGQKTPFFHKMVADLVEQMGQAYPELAEAQSRVTEVLKAEEERFFETIENGMSILDAALADLKLKGGKTLDGELAFKLHDTFGFPLDLTQDVCREQEIGVDEAAFDAAMNRQREQARAAGKFKMAAGLEYTGDKTVFHGYEKLELPQARVTALYVDGAAVNAMQPGQTGVVVLDNTPFYAESGGQAGDQGVLKAGNAVFAVTDTTKIQADVFGHQGTLEGGALKVGDAVSAQVDAQRRARTVRNHSATHLMHKALREVLGSHVQQKGSLVDADKTRFDFSHNAALTDEQIRRVEEIVNAEILRNDDTHAEIMPFDDAVKSGAMALFGEKYADDVRVLSIGTSKELCGGTHVHRTGDIGLFKIVVEGGVAAGIRRVEAITGDNALHYLQGLDARLNEAAAVLKAQPSELVPRIGQVQDQVRALEKELERLKSKLAASQGDELAAQAVDIKGLKVLAAQLDGADVKTLRETMDKLKDKLKSAAIVLGAVSDGKVSLIAGVTADATGKVKAGELVNFVAQQVGGKGGGRPDMAQAGGTEPAKLPQALAGVGEWVAGKI</sequence>
<proteinExistence type="inferred from homology"/>
<reference key="1">
    <citation type="journal article" date="2006" name="Nat. Biotechnol.">
        <title>Genome sequence of the bioplastic-producing 'Knallgas' bacterium Ralstonia eutropha H16.</title>
        <authorList>
            <person name="Pohlmann A."/>
            <person name="Fricke W.F."/>
            <person name="Reinecke F."/>
            <person name="Kusian B."/>
            <person name="Liesegang H."/>
            <person name="Cramm R."/>
            <person name="Eitinger T."/>
            <person name="Ewering C."/>
            <person name="Poetter M."/>
            <person name="Schwartz E."/>
            <person name="Strittmatter A."/>
            <person name="Voss I."/>
            <person name="Gottschalk G."/>
            <person name="Steinbuechel A."/>
            <person name="Friedrich B."/>
            <person name="Bowien B."/>
        </authorList>
    </citation>
    <scope>NUCLEOTIDE SEQUENCE [LARGE SCALE GENOMIC DNA]</scope>
    <source>
        <strain>ATCC 17699 / DSM 428 / KCTC 22496 / NCIMB 10442 / H16 / Stanier 337</strain>
    </source>
</reference>
<evidence type="ECO:0000255" key="1">
    <source>
        <dbReference type="HAMAP-Rule" id="MF_00036"/>
    </source>
</evidence>
<feature type="chain" id="PRO_0000347747" description="Alanine--tRNA ligase">
    <location>
        <begin position="1"/>
        <end position="874"/>
    </location>
</feature>
<feature type="binding site" evidence="1">
    <location>
        <position position="564"/>
    </location>
    <ligand>
        <name>Zn(2+)</name>
        <dbReference type="ChEBI" id="CHEBI:29105"/>
    </ligand>
</feature>
<feature type="binding site" evidence="1">
    <location>
        <position position="568"/>
    </location>
    <ligand>
        <name>Zn(2+)</name>
        <dbReference type="ChEBI" id="CHEBI:29105"/>
    </ligand>
</feature>
<feature type="binding site" evidence="1">
    <location>
        <position position="665"/>
    </location>
    <ligand>
        <name>Zn(2+)</name>
        <dbReference type="ChEBI" id="CHEBI:29105"/>
    </ligand>
</feature>
<feature type="binding site" evidence="1">
    <location>
        <position position="669"/>
    </location>
    <ligand>
        <name>Zn(2+)</name>
        <dbReference type="ChEBI" id="CHEBI:29105"/>
    </ligand>
</feature>
<accession>Q0K823</accession>
<name>SYA_CUPNH</name>
<protein>
    <recommendedName>
        <fullName evidence="1">Alanine--tRNA ligase</fullName>
        <ecNumber evidence="1">6.1.1.7</ecNumber>
    </recommendedName>
    <alternativeName>
        <fullName evidence="1">Alanyl-tRNA synthetase</fullName>
        <shortName evidence="1">AlaRS</shortName>
    </alternativeName>
</protein>
<dbReference type="EC" id="6.1.1.7" evidence="1"/>
<dbReference type="EMBL" id="AM260479">
    <property type="protein sequence ID" value="CAJ93848.1"/>
    <property type="molecule type" value="Genomic_DNA"/>
</dbReference>
<dbReference type="RefSeq" id="WP_011615822.1">
    <property type="nucleotide sequence ID" value="NC_008313.1"/>
</dbReference>
<dbReference type="SMR" id="Q0K823"/>
<dbReference type="STRING" id="381666.H16_A2769"/>
<dbReference type="KEGG" id="reh:H16_A2769"/>
<dbReference type="PATRIC" id="fig|381666.6.peg.3166"/>
<dbReference type="eggNOG" id="COG0013">
    <property type="taxonomic scope" value="Bacteria"/>
</dbReference>
<dbReference type="HOGENOM" id="CLU_004485_1_1_4"/>
<dbReference type="OrthoDB" id="9803884at2"/>
<dbReference type="Proteomes" id="UP000008210">
    <property type="component" value="Chromosome 1"/>
</dbReference>
<dbReference type="GO" id="GO:0005829">
    <property type="term" value="C:cytosol"/>
    <property type="evidence" value="ECO:0007669"/>
    <property type="project" value="TreeGrafter"/>
</dbReference>
<dbReference type="GO" id="GO:0004813">
    <property type="term" value="F:alanine-tRNA ligase activity"/>
    <property type="evidence" value="ECO:0007669"/>
    <property type="project" value="UniProtKB-UniRule"/>
</dbReference>
<dbReference type="GO" id="GO:0002161">
    <property type="term" value="F:aminoacyl-tRNA deacylase activity"/>
    <property type="evidence" value="ECO:0007669"/>
    <property type="project" value="TreeGrafter"/>
</dbReference>
<dbReference type="GO" id="GO:0005524">
    <property type="term" value="F:ATP binding"/>
    <property type="evidence" value="ECO:0007669"/>
    <property type="project" value="UniProtKB-UniRule"/>
</dbReference>
<dbReference type="GO" id="GO:0000049">
    <property type="term" value="F:tRNA binding"/>
    <property type="evidence" value="ECO:0007669"/>
    <property type="project" value="UniProtKB-KW"/>
</dbReference>
<dbReference type="GO" id="GO:0008270">
    <property type="term" value="F:zinc ion binding"/>
    <property type="evidence" value="ECO:0007669"/>
    <property type="project" value="UniProtKB-UniRule"/>
</dbReference>
<dbReference type="GO" id="GO:0006419">
    <property type="term" value="P:alanyl-tRNA aminoacylation"/>
    <property type="evidence" value="ECO:0007669"/>
    <property type="project" value="UniProtKB-UniRule"/>
</dbReference>
<dbReference type="GO" id="GO:0045892">
    <property type="term" value="P:negative regulation of DNA-templated transcription"/>
    <property type="evidence" value="ECO:0007669"/>
    <property type="project" value="TreeGrafter"/>
</dbReference>
<dbReference type="CDD" id="cd00673">
    <property type="entry name" value="AlaRS_core"/>
    <property type="match status" value="1"/>
</dbReference>
<dbReference type="FunFam" id="2.40.30.130:FF:000001">
    <property type="entry name" value="Alanine--tRNA ligase"/>
    <property type="match status" value="1"/>
</dbReference>
<dbReference type="FunFam" id="3.10.310.40:FF:000001">
    <property type="entry name" value="Alanine--tRNA ligase"/>
    <property type="match status" value="1"/>
</dbReference>
<dbReference type="FunFam" id="3.30.54.20:FF:000001">
    <property type="entry name" value="Alanine--tRNA ligase"/>
    <property type="match status" value="1"/>
</dbReference>
<dbReference type="FunFam" id="3.30.930.10:FF:000004">
    <property type="entry name" value="Alanine--tRNA ligase"/>
    <property type="match status" value="1"/>
</dbReference>
<dbReference type="FunFam" id="3.30.980.10:FF:000004">
    <property type="entry name" value="Alanine--tRNA ligase, cytoplasmic"/>
    <property type="match status" value="1"/>
</dbReference>
<dbReference type="Gene3D" id="2.40.30.130">
    <property type="match status" value="1"/>
</dbReference>
<dbReference type="Gene3D" id="3.10.310.40">
    <property type="match status" value="1"/>
</dbReference>
<dbReference type="Gene3D" id="3.30.54.20">
    <property type="match status" value="1"/>
</dbReference>
<dbReference type="Gene3D" id="6.10.250.550">
    <property type="match status" value="1"/>
</dbReference>
<dbReference type="Gene3D" id="3.30.930.10">
    <property type="entry name" value="Bira Bifunctional Protein, Domain 2"/>
    <property type="match status" value="1"/>
</dbReference>
<dbReference type="Gene3D" id="3.30.980.10">
    <property type="entry name" value="Threonyl-trna Synthetase, Chain A, domain 2"/>
    <property type="match status" value="1"/>
</dbReference>
<dbReference type="HAMAP" id="MF_00036_B">
    <property type="entry name" value="Ala_tRNA_synth_B"/>
    <property type="match status" value="1"/>
</dbReference>
<dbReference type="InterPro" id="IPR045864">
    <property type="entry name" value="aa-tRNA-synth_II/BPL/LPL"/>
</dbReference>
<dbReference type="InterPro" id="IPR002318">
    <property type="entry name" value="Ala-tRNA-lgiase_IIc"/>
</dbReference>
<dbReference type="InterPro" id="IPR018162">
    <property type="entry name" value="Ala-tRNA-ligase_IIc_anticod-bd"/>
</dbReference>
<dbReference type="InterPro" id="IPR018165">
    <property type="entry name" value="Ala-tRNA-synth_IIc_core"/>
</dbReference>
<dbReference type="InterPro" id="IPR018164">
    <property type="entry name" value="Ala-tRNA-synth_IIc_N"/>
</dbReference>
<dbReference type="InterPro" id="IPR050058">
    <property type="entry name" value="Ala-tRNA_ligase"/>
</dbReference>
<dbReference type="InterPro" id="IPR023033">
    <property type="entry name" value="Ala_tRNA_ligase_euk/bac"/>
</dbReference>
<dbReference type="InterPro" id="IPR003156">
    <property type="entry name" value="DHHA1_dom"/>
</dbReference>
<dbReference type="InterPro" id="IPR018163">
    <property type="entry name" value="Thr/Ala-tRNA-synth_IIc_edit"/>
</dbReference>
<dbReference type="InterPro" id="IPR009000">
    <property type="entry name" value="Transl_B-barrel_sf"/>
</dbReference>
<dbReference type="InterPro" id="IPR012947">
    <property type="entry name" value="tRNA_SAD"/>
</dbReference>
<dbReference type="NCBIfam" id="TIGR00344">
    <property type="entry name" value="alaS"/>
    <property type="match status" value="1"/>
</dbReference>
<dbReference type="PANTHER" id="PTHR11777:SF9">
    <property type="entry name" value="ALANINE--TRNA LIGASE, CYTOPLASMIC"/>
    <property type="match status" value="1"/>
</dbReference>
<dbReference type="PANTHER" id="PTHR11777">
    <property type="entry name" value="ALANYL-TRNA SYNTHETASE"/>
    <property type="match status" value="1"/>
</dbReference>
<dbReference type="Pfam" id="PF02272">
    <property type="entry name" value="DHHA1"/>
    <property type="match status" value="1"/>
</dbReference>
<dbReference type="Pfam" id="PF01411">
    <property type="entry name" value="tRNA-synt_2c"/>
    <property type="match status" value="1"/>
</dbReference>
<dbReference type="Pfam" id="PF07973">
    <property type="entry name" value="tRNA_SAD"/>
    <property type="match status" value="1"/>
</dbReference>
<dbReference type="PRINTS" id="PR00980">
    <property type="entry name" value="TRNASYNTHALA"/>
</dbReference>
<dbReference type="SMART" id="SM00863">
    <property type="entry name" value="tRNA_SAD"/>
    <property type="match status" value="1"/>
</dbReference>
<dbReference type="SUPFAM" id="SSF55681">
    <property type="entry name" value="Class II aaRS and biotin synthetases"/>
    <property type="match status" value="1"/>
</dbReference>
<dbReference type="SUPFAM" id="SSF101353">
    <property type="entry name" value="Putative anticodon-binding domain of alanyl-tRNA synthetase (AlaRS)"/>
    <property type="match status" value="1"/>
</dbReference>
<dbReference type="SUPFAM" id="SSF55186">
    <property type="entry name" value="ThrRS/AlaRS common domain"/>
    <property type="match status" value="1"/>
</dbReference>
<dbReference type="SUPFAM" id="SSF50447">
    <property type="entry name" value="Translation proteins"/>
    <property type="match status" value="1"/>
</dbReference>
<dbReference type="PROSITE" id="PS50860">
    <property type="entry name" value="AA_TRNA_LIGASE_II_ALA"/>
    <property type="match status" value="1"/>
</dbReference>
<keyword id="KW-0030">Aminoacyl-tRNA synthetase</keyword>
<keyword id="KW-0067">ATP-binding</keyword>
<keyword id="KW-0963">Cytoplasm</keyword>
<keyword id="KW-0436">Ligase</keyword>
<keyword id="KW-0479">Metal-binding</keyword>
<keyword id="KW-0547">Nucleotide-binding</keyword>
<keyword id="KW-0648">Protein biosynthesis</keyword>
<keyword id="KW-1185">Reference proteome</keyword>
<keyword id="KW-0694">RNA-binding</keyword>
<keyword id="KW-0820">tRNA-binding</keyword>
<keyword id="KW-0862">Zinc</keyword>
<comment type="function">
    <text evidence="1">Catalyzes the attachment of alanine to tRNA(Ala) in a two-step reaction: alanine is first activated by ATP to form Ala-AMP and then transferred to the acceptor end of tRNA(Ala). Also edits incorrectly charged Ser-tRNA(Ala) and Gly-tRNA(Ala) via its editing domain.</text>
</comment>
<comment type="catalytic activity">
    <reaction evidence="1">
        <text>tRNA(Ala) + L-alanine + ATP = L-alanyl-tRNA(Ala) + AMP + diphosphate</text>
        <dbReference type="Rhea" id="RHEA:12540"/>
        <dbReference type="Rhea" id="RHEA-COMP:9657"/>
        <dbReference type="Rhea" id="RHEA-COMP:9923"/>
        <dbReference type="ChEBI" id="CHEBI:30616"/>
        <dbReference type="ChEBI" id="CHEBI:33019"/>
        <dbReference type="ChEBI" id="CHEBI:57972"/>
        <dbReference type="ChEBI" id="CHEBI:78442"/>
        <dbReference type="ChEBI" id="CHEBI:78497"/>
        <dbReference type="ChEBI" id="CHEBI:456215"/>
        <dbReference type="EC" id="6.1.1.7"/>
    </reaction>
</comment>
<comment type="cofactor">
    <cofactor evidence="1">
        <name>Zn(2+)</name>
        <dbReference type="ChEBI" id="CHEBI:29105"/>
    </cofactor>
    <text evidence="1">Binds 1 zinc ion per subunit.</text>
</comment>
<comment type="subcellular location">
    <subcellularLocation>
        <location evidence="1">Cytoplasm</location>
    </subcellularLocation>
</comment>
<comment type="domain">
    <text evidence="1">Consists of three domains; the N-terminal catalytic domain, the editing domain and the C-terminal C-Ala domain. The editing domain removes incorrectly charged amino acids, while the C-Ala domain, along with tRNA(Ala), serves as a bridge to cooperatively bring together the editing and aminoacylation centers thus stimulating deacylation of misacylated tRNAs.</text>
</comment>
<comment type="similarity">
    <text evidence="1">Belongs to the class-II aminoacyl-tRNA synthetase family.</text>
</comment>
<organism>
    <name type="scientific">Cupriavidus necator (strain ATCC 17699 / DSM 428 / KCTC 22496 / NCIMB 10442 / H16 / Stanier 337)</name>
    <name type="common">Ralstonia eutropha</name>
    <dbReference type="NCBI Taxonomy" id="381666"/>
    <lineage>
        <taxon>Bacteria</taxon>
        <taxon>Pseudomonadati</taxon>
        <taxon>Pseudomonadota</taxon>
        <taxon>Betaproteobacteria</taxon>
        <taxon>Burkholderiales</taxon>
        <taxon>Burkholderiaceae</taxon>
        <taxon>Cupriavidus</taxon>
    </lineage>
</organism>